<protein>
    <recommendedName>
        <fullName evidence="3">Propane 2-monooxygenase, hydroxylase component large subunit</fullName>
        <shortName evidence="3">PrMO</shortName>
        <ecNumber evidence="5">1.14.13.227</ecNumber>
    </recommendedName>
</protein>
<organism>
    <name type="scientific">Rhodococcus jostii (strain RHA1)</name>
    <dbReference type="NCBI Taxonomy" id="101510"/>
    <lineage>
        <taxon>Bacteria</taxon>
        <taxon>Bacillati</taxon>
        <taxon>Actinomycetota</taxon>
        <taxon>Actinomycetes</taxon>
        <taxon>Mycobacteriales</taxon>
        <taxon>Nocardiaceae</taxon>
        <taxon>Rhodococcus</taxon>
    </lineage>
</organism>
<name>PRMA_RHOJR</name>
<evidence type="ECO:0000250" key="1">
    <source>
        <dbReference type="UniProtKB" id="Q00456"/>
    </source>
</evidence>
<evidence type="ECO:0000269" key="2">
    <source>
    </source>
</evidence>
<evidence type="ECO:0000303" key="3">
    <source>
    </source>
</evidence>
<evidence type="ECO:0000305" key="4"/>
<evidence type="ECO:0000305" key="5">
    <source>
    </source>
</evidence>
<evidence type="ECO:0000305" key="6">
    <source>
    </source>
</evidence>
<evidence type="ECO:0000312" key="7">
    <source>
        <dbReference type="EMBL" id="ABG92277.1"/>
    </source>
</evidence>
<evidence type="ECO:0000312" key="8">
    <source>
        <dbReference type="Proteomes" id="UP000008710"/>
    </source>
</evidence>
<comment type="function">
    <text evidence="2">Component of the propane 2-monooxygenase multicomponent enzyme system which is involved in the degradation of propane via the O2-dependent hydroxylation of propane. Also able to catalyze the oxidation the water contaminant N-nitrosodimethylamine (NDMA).</text>
</comment>
<comment type="catalytic activity">
    <reaction evidence="5">
        <text>propane + NADH + O2 + H(+) = propan-2-ol + NAD(+) + H2O</text>
        <dbReference type="Rhea" id="RHEA:49992"/>
        <dbReference type="ChEBI" id="CHEBI:15377"/>
        <dbReference type="ChEBI" id="CHEBI:15378"/>
        <dbReference type="ChEBI" id="CHEBI:15379"/>
        <dbReference type="ChEBI" id="CHEBI:17824"/>
        <dbReference type="ChEBI" id="CHEBI:32879"/>
        <dbReference type="ChEBI" id="CHEBI:57540"/>
        <dbReference type="ChEBI" id="CHEBI:57945"/>
        <dbReference type="EC" id="1.14.13.227"/>
    </reaction>
</comment>
<comment type="cofactor">
    <cofactor evidence="1">
        <name>Fe(2+)</name>
        <dbReference type="ChEBI" id="CHEBI:29033"/>
    </cofactor>
    <text evidence="1">Binds 2 Fe(2+) ions per subunit.</text>
</comment>
<comment type="subunit">
    <text evidence="5 6">The propane 2-monooxygenase multicomponent enzyme system is composed of an electron transfer component and a monooxygenase component interacting with the effector protein PrmD. The electron transfer component is composed of a reductase (PrmB), and the monooxygenase component is formed by a large subunit (PrmA) and a small subunit (PrmC) (PubMed:17873074). Probably requires the presence of the chaperonin-like protein PrmG to ensure a productive folding, resulting of a soluble PrmA, which leads to the active form of PrmABCD (PubMed:23171424).</text>
</comment>
<comment type="induction">
    <text evidence="2">By propane.</text>
</comment>
<comment type="disruption phenotype">
    <text evidence="2">Cells lacking this gene are unable to grow on propane and to degrade N-nitrosodimethylamine (NDMA).</text>
</comment>
<comment type="similarity">
    <text evidence="4">Belongs to the TmoA/XamoA family.</text>
</comment>
<gene>
    <name evidence="3" type="primary">prmA</name>
    <name evidence="7" type="ordered locus">RHA1_ro00441</name>
</gene>
<keyword id="KW-0408">Iron</keyword>
<keyword id="KW-0479">Metal-binding</keyword>
<keyword id="KW-0503">Monooxygenase</keyword>
<keyword id="KW-0520">NAD</keyword>
<keyword id="KW-0560">Oxidoreductase</keyword>
<accession>Q0SJK9</accession>
<feature type="chain" id="PRO_0000442963" description="Propane 2-monooxygenase, hydroxylase component large subunit">
    <location>
        <begin position="1"/>
        <end position="544"/>
    </location>
</feature>
<feature type="binding site" evidence="1">
    <location>
        <position position="97"/>
    </location>
    <ligand>
        <name>Fe cation</name>
        <dbReference type="ChEBI" id="CHEBI:24875"/>
        <label>1</label>
        <note>catalytic</note>
    </ligand>
</feature>
<feature type="binding site" evidence="1">
    <location>
        <position position="127"/>
    </location>
    <ligand>
        <name>Fe cation</name>
        <dbReference type="ChEBI" id="CHEBI:24875"/>
        <label>1</label>
        <note>catalytic</note>
    </ligand>
</feature>
<feature type="binding site" evidence="1">
    <location>
        <position position="127"/>
    </location>
    <ligand>
        <name>Fe cation</name>
        <dbReference type="ChEBI" id="CHEBI:24875"/>
        <label>2</label>
        <note>catalytic</note>
    </ligand>
</feature>
<feature type="binding site" evidence="1">
    <location>
        <position position="130"/>
    </location>
    <ligand>
        <name>Fe cation</name>
        <dbReference type="ChEBI" id="CHEBI:24875"/>
        <label>1</label>
        <note>catalytic</note>
    </ligand>
</feature>
<feature type="binding site" evidence="1">
    <location>
        <position position="192"/>
    </location>
    <ligand>
        <name>Fe cation</name>
        <dbReference type="ChEBI" id="CHEBI:24875"/>
        <label>2</label>
        <note>catalytic</note>
    </ligand>
</feature>
<feature type="binding site" evidence="1">
    <location>
        <position position="226"/>
    </location>
    <ligand>
        <name>Fe cation</name>
        <dbReference type="ChEBI" id="CHEBI:24875"/>
        <label>1</label>
        <note>catalytic</note>
    </ligand>
</feature>
<feature type="binding site" evidence="1">
    <location>
        <position position="226"/>
    </location>
    <ligand>
        <name>Fe cation</name>
        <dbReference type="ChEBI" id="CHEBI:24875"/>
        <label>2</label>
        <note>catalytic</note>
    </ligand>
</feature>
<feature type="binding site" evidence="1">
    <location>
        <position position="229"/>
    </location>
    <ligand>
        <name>Fe cation</name>
        <dbReference type="ChEBI" id="CHEBI:24875"/>
        <label>2</label>
        <note>catalytic</note>
    </ligand>
</feature>
<proteinExistence type="evidence at protein level"/>
<reference key="1">
    <citation type="journal article" date="2006" name="Proc. Natl. Acad. Sci. U.S.A.">
        <title>The complete genome of Rhodococcus sp. RHA1 provides insights into a catabolic powerhouse.</title>
        <authorList>
            <person name="McLeod M.P."/>
            <person name="Warren R.L."/>
            <person name="Hsiao W.W.L."/>
            <person name="Araki N."/>
            <person name="Myhre M."/>
            <person name="Fernandes C."/>
            <person name="Miyazawa D."/>
            <person name="Wong W."/>
            <person name="Lillquist A.L."/>
            <person name="Wang D."/>
            <person name="Dosanjh M."/>
            <person name="Hara H."/>
            <person name="Petrescu A."/>
            <person name="Morin R.D."/>
            <person name="Yang G."/>
            <person name="Stott J.M."/>
            <person name="Schein J.E."/>
            <person name="Shin H."/>
            <person name="Smailus D."/>
            <person name="Siddiqui A.S."/>
            <person name="Marra M.A."/>
            <person name="Jones S.J.M."/>
            <person name="Holt R."/>
            <person name="Brinkman F.S.L."/>
            <person name="Miyauchi K."/>
            <person name="Fukuda M."/>
            <person name="Davies J.E."/>
            <person name="Mohn W.W."/>
            <person name="Eltis L.D."/>
        </authorList>
    </citation>
    <scope>NUCLEOTIDE SEQUENCE [LARGE SCALE GENOMIC DNA]</scope>
    <source>
        <strain evidence="8">RHA1</strain>
    </source>
</reference>
<reference key="2">
    <citation type="journal article" date="2007" name="Appl. Environ. Microbiol.">
        <title>An inducible propane monooxygenase is responsible for N-nitrosodimethylamine degradation by Rhodococcus sp. strain RHA1.</title>
        <authorList>
            <person name="Sharp J.O."/>
            <person name="Sales C.M."/>
            <person name="LeBlanc J.C."/>
            <person name="Liu J."/>
            <person name="Wood T.K."/>
            <person name="Eltis L.D."/>
            <person name="Mohn W.W."/>
            <person name="Alvarez-Cohen L."/>
        </authorList>
    </citation>
    <scope>FUNCTION</scope>
    <scope>CATALYTIC ACTIVITY</scope>
    <scope>INDUCTION BY PROPANE</scope>
    <scope>DISRUPTION PHENOTYPE</scope>
    <scope>SUBSTRATE SPECIFICITY</scope>
    <scope>SUBUNIT</scope>
    <source>
        <strain>RHA1</strain>
    </source>
</reference>
<reference key="3">
    <citation type="journal article" date="2013" name="FEBS J.">
        <title>The mycobacterial binuclear iron monooxygenases require a specific chaperonin-like protein for functional expression in a heterologous host.</title>
        <authorList>
            <person name="Furuya T."/>
            <person name="Hayashi M."/>
            <person name="Semba H."/>
            <person name="Kino K."/>
        </authorList>
    </citation>
    <scope>SUBUNIT</scope>
    <source>
        <strain>RHA1</strain>
    </source>
</reference>
<dbReference type="EC" id="1.14.13.227" evidence="5"/>
<dbReference type="EMBL" id="CP000431">
    <property type="protein sequence ID" value="ABG92277.1"/>
    <property type="molecule type" value="Genomic_DNA"/>
</dbReference>
<dbReference type="RefSeq" id="WP_011593714.1">
    <property type="nucleotide sequence ID" value="NC_008268.1"/>
</dbReference>
<dbReference type="SMR" id="Q0SJK9"/>
<dbReference type="KEGG" id="rha:RHA1_ro00441"/>
<dbReference type="PATRIC" id="fig|101510.16.peg.469"/>
<dbReference type="eggNOG" id="COG3350">
    <property type="taxonomic scope" value="Bacteria"/>
</dbReference>
<dbReference type="HOGENOM" id="CLU_040795_0_0_11"/>
<dbReference type="OrthoDB" id="7591937at2"/>
<dbReference type="BRENDA" id="1.14.13.227">
    <property type="organism ID" value="10764"/>
</dbReference>
<dbReference type="Proteomes" id="UP000008710">
    <property type="component" value="Chromosome"/>
</dbReference>
<dbReference type="GO" id="GO:0046872">
    <property type="term" value="F:metal ion binding"/>
    <property type="evidence" value="ECO:0007669"/>
    <property type="project" value="UniProtKB-KW"/>
</dbReference>
<dbReference type="GO" id="GO:0004497">
    <property type="term" value="F:monooxygenase activity"/>
    <property type="evidence" value="ECO:0007669"/>
    <property type="project" value="UniProtKB-KW"/>
</dbReference>
<dbReference type="Gene3D" id="1.10.620.20">
    <property type="entry name" value="Ribonucleotide Reductase, subunit A"/>
    <property type="match status" value="1"/>
</dbReference>
<dbReference type="InterPro" id="IPR009078">
    <property type="entry name" value="Ferritin-like_SF"/>
</dbReference>
<dbReference type="InterPro" id="IPR003430">
    <property type="entry name" value="Phenol_Hydrox"/>
</dbReference>
<dbReference type="InterPro" id="IPR012348">
    <property type="entry name" value="RNR-like"/>
</dbReference>
<dbReference type="Pfam" id="PF02332">
    <property type="entry name" value="Phenol_Hydrox"/>
    <property type="match status" value="1"/>
</dbReference>
<dbReference type="SUPFAM" id="SSF47240">
    <property type="entry name" value="Ferritin-like"/>
    <property type="match status" value="1"/>
</dbReference>
<sequence length="544" mass="63222">MSRQSLTKAHAKITELSWDPTFATPATRFGTDYTFEKAPKKDPLKQIMRSYFPMEEEKDNRVYGAMDGAIRGNMFRQVQQRWLEWQKLFLSIIPFPEISAARAMPMAIDAVPNPEIHNGLAVQMIDEVRHSTIQMNLKKLYMNNYIDPAGFDMTEKAFANNYAGTIGRQFGEGFITGDAITAANIYLTVVAETAFTNTLFVAMPDEAAANGDYLLPTVFHSVQSDESRHISNGYSILLMALADERNRPLLERDLRYAWWNNHCVVDAAIGTFIEYGTKDRRKDRESYAEMWRRWIYDDYYRSYLIPLEKYGLTIPHDLVEEAWKRITDKGYVHEVARFFATGWPVNYWRIDAMTDKDFEWFEHKYPGWYSKYGKWWEEYNRLAYPGRNKPIAFEEVGYQYPHRCWTCMVPALIREDMVVEKVDDQWRTYCSETCYWTDAVAFRSEYQGRPTPNMGRLTGFREWETLHHGKDLADIVSDLGYVRDDGKTLVGQPHLDLDDPKKMWTLDDVRGNTFQSPNVLLNEMSDAERNAHIAAYRAGGAVPA</sequence>